<proteinExistence type="inferred from homology"/>
<accession>C3PN02</accession>
<organism>
    <name type="scientific">Rickettsia africae (strain ESF-5)</name>
    <dbReference type="NCBI Taxonomy" id="347255"/>
    <lineage>
        <taxon>Bacteria</taxon>
        <taxon>Pseudomonadati</taxon>
        <taxon>Pseudomonadota</taxon>
        <taxon>Alphaproteobacteria</taxon>
        <taxon>Rickettsiales</taxon>
        <taxon>Rickettsiaceae</taxon>
        <taxon>Rickettsieae</taxon>
        <taxon>Rickettsia</taxon>
        <taxon>spotted fever group</taxon>
    </lineage>
</organism>
<sequence>MLLNMNLQELKQKYNYDVATKMMQQYLDIKFAHLDCLLLFRMGDFYEMFYEDAILASNVLGIALTKRGKNGEEEIAMCGVPYHALENYLTKLIEANYKVAICDQLETPEEAKNRGGYKAVVTRDVTRIITPGTIIEENLIASAEPNYLASLVIPKNKETASLCYVDLSTSEIVVVNVPETEILNELARLKPREILLSENLRSSNLADSIFKQLNLRITYQVDSFFAINKCEKIILDFYKMKDIKGIGEISSSQICAIGSVLEYLSLTQKQNIPHLPIPRIIKFHSYMTIDFSTRRNLEIVTNSQGGSQGSLLSTLNHTVTKQGGRLLYNFLSSPLTNIAKINHRLNITEFFYSNLEIVKKIRELLKKTSDIERCLTRITMNRSSGRDLLSIKYTLETATIIKGVFFDAYGFNLPDFIEKIIKPLSGDAELYNLIDETIREDAPNNLNDGGIIKHEYHPKVAQLHDLINNGKLYIEKLKDQYRKETGIDSLKISHNNVIGLFIDITAKNVNKILDPKFIHRQTTVNHVRYTTAELQKLESELVNAKTLVISLEKELYADICSQVIEKASYLRILASSLSGLDVFCNFAYIADEYDYVKPEFTDDLSFDIVKGRHPVVEKALQRESKSFVYNDCHLSELERIWLITGPNMAGKSTFLRQNAIIAIIAQIGSFVPAKSAKIGVVDKIFSRIGAADDLIKGQSTFMAEMLETSAILAQSTKNSLIILDEVGRGTSTYDGVSIAWSVLEYIHDKLKCRCLFATHYHELTVMSNFLPALQNYTIAIEESGKDILFLHNIISGAADRSYGLHVASLAGLPASVINRAEQILLKFEKTSTGKGKNILSTESNNLSLFYLEPNKTTISSKLDKKFRTIDPDKLSPKEALELIYELKKLV</sequence>
<reference key="1">
    <citation type="journal article" date="2009" name="BMC Genomics">
        <title>Analysis of the Rickettsia africae genome reveals that virulence acquisition in Rickettsia species may be explained by genome reduction.</title>
        <authorList>
            <person name="Fournier P.-E."/>
            <person name="El Karkouri K."/>
            <person name="Leroy Q."/>
            <person name="Robert C."/>
            <person name="Giumelli B."/>
            <person name="Renesto P."/>
            <person name="Socolovschi C."/>
            <person name="Parola P."/>
            <person name="Audic S."/>
            <person name="Raoult D."/>
        </authorList>
    </citation>
    <scope>NUCLEOTIDE SEQUENCE [LARGE SCALE GENOMIC DNA]</scope>
    <source>
        <strain>ESF-5</strain>
    </source>
</reference>
<gene>
    <name evidence="1" type="primary">mutS</name>
    <name type="ordered locus">RAF_ORF0375</name>
</gene>
<dbReference type="EMBL" id="CP001612">
    <property type="protein sequence ID" value="ACP53312.1"/>
    <property type="molecule type" value="Genomic_DNA"/>
</dbReference>
<dbReference type="SMR" id="C3PN02"/>
<dbReference type="KEGG" id="raf:RAF_ORF0375"/>
<dbReference type="HOGENOM" id="CLU_002472_3_1_5"/>
<dbReference type="Proteomes" id="UP000002305">
    <property type="component" value="Chromosome"/>
</dbReference>
<dbReference type="GO" id="GO:0005524">
    <property type="term" value="F:ATP binding"/>
    <property type="evidence" value="ECO:0007669"/>
    <property type="project" value="UniProtKB-UniRule"/>
</dbReference>
<dbReference type="GO" id="GO:0140664">
    <property type="term" value="F:ATP-dependent DNA damage sensor activity"/>
    <property type="evidence" value="ECO:0007669"/>
    <property type="project" value="InterPro"/>
</dbReference>
<dbReference type="GO" id="GO:0003684">
    <property type="term" value="F:damaged DNA binding"/>
    <property type="evidence" value="ECO:0007669"/>
    <property type="project" value="UniProtKB-UniRule"/>
</dbReference>
<dbReference type="GO" id="GO:0030983">
    <property type="term" value="F:mismatched DNA binding"/>
    <property type="evidence" value="ECO:0007669"/>
    <property type="project" value="InterPro"/>
</dbReference>
<dbReference type="GO" id="GO:0006298">
    <property type="term" value="P:mismatch repair"/>
    <property type="evidence" value="ECO:0007669"/>
    <property type="project" value="UniProtKB-UniRule"/>
</dbReference>
<dbReference type="CDD" id="cd03284">
    <property type="entry name" value="ABC_MutS1"/>
    <property type="match status" value="1"/>
</dbReference>
<dbReference type="FunFam" id="3.40.50.300:FF:001238">
    <property type="entry name" value="DNA mismatch repair protein"/>
    <property type="match status" value="1"/>
</dbReference>
<dbReference type="FunFam" id="3.40.1170.10:FF:000001">
    <property type="entry name" value="DNA mismatch repair protein MutS"/>
    <property type="match status" value="1"/>
</dbReference>
<dbReference type="Gene3D" id="1.10.1420.10">
    <property type="match status" value="2"/>
</dbReference>
<dbReference type="Gene3D" id="6.10.140.430">
    <property type="match status" value="1"/>
</dbReference>
<dbReference type="Gene3D" id="3.40.1170.10">
    <property type="entry name" value="DNA repair protein MutS, domain I"/>
    <property type="match status" value="1"/>
</dbReference>
<dbReference type="Gene3D" id="3.30.420.110">
    <property type="entry name" value="MutS, connector domain"/>
    <property type="match status" value="1"/>
</dbReference>
<dbReference type="Gene3D" id="3.40.50.300">
    <property type="entry name" value="P-loop containing nucleotide triphosphate hydrolases"/>
    <property type="match status" value="1"/>
</dbReference>
<dbReference type="HAMAP" id="MF_00096">
    <property type="entry name" value="MutS"/>
    <property type="match status" value="1"/>
</dbReference>
<dbReference type="InterPro" id="IPR005748">
    <property type="entry name" value="DNA_mismatch_repair_MutS"/>
</dbReference>
<dbReference type="InterPro" id="IPR007695">
    <property type="entry name" value="DNA_mismatch_repair_MutS-lik_N"/>
</dbReference>
<dbReference type="InterPro" id="IPR017261">
    <property type="entry name" value="DNA_mismatch_repair_MutS/MSH"/>
</dbReference>
<dbReference type="InterPro" id="IPR000432">
    <property type="entry name" value="DNA_mismatch_repair_MutS_C"/>
</dbReference>
<dbReference type="InterPro" id="IPR007861">
    <property type="entry name" value="DNA_mismatch_repair_MutS_clamp"/>
</dbReference>
<dbReference type="InterPro" id="IPR007696">
    <property type="entry name" value="DNA_mismatch_repair_MutS_core"/>
</dbReference>
<dbReference type="InterPro" id="IPR016151">
    <property type="entry name" value="DNA_mismatch_repair_MutS_N"/>
</dbReference>
<dbReference type="InterPro" id="IPR036187">
    <property type="entry name" value="DNA_mismatch_repair_MutS_sf"/>
</dbReference>
<dbReference type="InterPro" id="IPR007860">
    <property type="entry name" value="DNA_mmatch_repair_MutS_con_dom"/>
</dbReference>
<dbReference type="InterPro" id="IPR045076">
    <property type="entry name" value="MutS"/>
</dbReference>
<dbReference type="InterPro" id="IPR036678">
    <property type="entry name" value="MutS_con_dom_sf"/>
</dbReference>
<dbReference type="InterPro" id="IPR027417">
    <property type="entry name" value="P-loop_NTPase"/>
</dbReference>
<dbReference type="NCBIfam" id="TIGR01070">
    <property type="entry name" value="mutS1"/>
    <property type="match status" value="1"/>
</dbReference>
<dbReference type="NCBIfam" id="NF003810">
    <property type="entry name" value="PRK05399.1"/>
    <property type="match status" value="1"/>
</dbReference>
<dbReference type="PANTHER" id="PTHR11361:SF34">
    <property type="entry name" value="DNA MISMATCH REPAIR PROTEIN MSH1, MITOCHONDRIAL"/>
    <property type="match status" value="1"/>
</dbReference>
<dbReference type="PANTHER" id="PTHR11361">
    <property type="entry name" value="DNA MISMATCH REPAIR PROTEIN MUTS FAMILY MEMBER"/>
    <property type="match status" value="1"/>
</dbReference>
<dbReference type="Pfam" id="PF01624">
    <property type="entry name" value="MutS_I"/>
    <property type="match status" value="1"/>
</dbReference>
<dbReference type="Pfam" id="PF05188">
    <property type="entry name" value="MutS_II"/>
    <property type="match status" value="1"/>
</dbReference>
<dbReference type="Pfam" id="PF05192">
    <property type="entry name" value="MutS_III"/>
    <property type="match status" value="1"/>
</dbReference>
<dbReference type="Pfam" id="PF05190">
    <property type="entry name" value="MutS_IV"/>
    <property type="match status" value="1"/>
</dbReference>
<dbReference type="Pfam" id="PF00488">
    <property type="entry name" value="MutS_V"/>
    <property type="match status" value="1"/>
</dbReference>
<dbReference type="PIRSF" id="PIRSF037677">
    <property type="entry name" value="DNA_mis_repair_Msh6"/>
    <property type="match status" value="1"/>
</dbReference>
<dbReference type="SMART" id="SM00534">
    <property type="entry name" value="MUTSac"/>
    <property type="match status" value="1"/>
</dbReference>
<dbReference type="SMART" id="SM00533">
    <property type="entry name" value="MUTSd"/>
    <property type="match status" value="1"/>
</dbReference>
<dbReference type="SUPFAM" id="SSF55271">
    <property type="entry name" value="DNA repair protein MutS, domain I"/>
    <property type="match status" value="1"/>
</dbReference>
<dbReference type="SUPFAM" id="SSF53150">
    <property type="entry name" value="DNA repair protein MutS, domain II"/>
    <property type="match status" value="1"/>
</dbReference>
<dbReference type="SUPFAM" id="SSF48334">
    <property type="entry name" value="DNA repair protein MutS, domain III"/>
    <property type="match status" value="1"/>
</dbReference>
<dbReference type="SUPFAM" id="SSF52540">
    <property type="entry name" value="P-loop containing nucleoside triphosphate hydrolases"/>
    <property type="match status" value="1"/>
</dbReference>
<dbReference type="PROSITE" id="PS00486">
    <property type="entry name" value="DNA_MISMATCH_REPAIR_2"/>
    <property type="match status" value="1"/>
</dbReference>
<evidence type="ECO:0000255" key="1">
    <source>
        <dbReference type="HAMAP-Rule" id="MF_00096"/>
    </source>
</evidence>
<name>MUTS_RICAE</name>
<keyword id="KW-0067">ATP-binding</keyword>
<keyword id="KW-0227">DNA damage</keyword>
<keyword id="KW-0234">DNA repair</keyword>
<keyword id="KW-0238">DNA-binding</keyword>
<keyword id="KW-0547">Nucleotide-binding</keyword>
<comment type="function">
    <text evidence="1">This protein is involved in the repair of mismatches in DNA. It is possible that it carries out the mismatch recognition step. This protein has a weak ATPase activity.</text>
</comment>
<comment type="similarity">
    <text evidence="1">Belongs to the DNA mismatch repair MutS family.</text>
</comment>
<protein>
    <recommendedName>
        <fullName evidence="1">DNA mismatch repair protein MutS</fullName>
    </recommendedName>
</protein>
<feature type="chain" id="PRO_1000202743" description="DNA mismatch repair protein MutS">
    <location>
        <begin position="1"/>
        <end position="890"/>
    </location>
</feature>
<feature type="binding site" evidence="1">
    <location>
        <begin position="645"/>
        <end position="652"/>
    </location>
    <ligand>
        <name>ATP</name>
        <dbReference type="ChEBI" id="CHEBI:30616"/>
    </ligand>
</feature>